<comment type="function">
    <text evidence="1">Promotes RNA polymerase assembly. Latches the N- and C-terminal regions of the beta' subunit thereby facilitating its interaction with the beta and alpha subunits (By similarity).</text>
</comment>
<comment type="catalytic activity">
    <reaction>
        <text>RNA(n) + a ribonucleoside 5'-triphosphate = RNA(n+1) + diphosphate</text>
        <dbReference type="Rhea" id="RHEA:21248"/>
        <dbReference type="Rhea" id="RHEA-COMP:14527"/>
        <dbReference type="Rhea" id="RHEA-COMP:17342"/>
        <dbReference type="ChEBI" id="CHEBI:33019"/>
        <dbReference type="ChEBI" id="CHEBI:61557"/>
        <dbReference type="ChEBI" id="CHEBI:140395"/>
        <dbReference type="EC" id="2.7.7.6"/>
    </reaction>
</comment>
<comment type="subunit">
    <text evidence="1">The RNAP catalytic core consists of 2 alpha, 1 beta, 1 beta' and 1 omega subunit. When a sigma factor is associated with the core the holoenzyme is formed, which can initiate transcription (By similarity).</text>
</comment>
<comment type="similarity">
    <text evidence="2">Belongs to the RNA polymerase subunit omega family.</text>
</comment>
<comment type="sequence caution" evidence="2">
    <conflict type="erroneous initiation">
        <sequence resource="EMBL-CDS" id="AAF12036"/>
    </conflict>
</comment>
<evidence type="ECO:0000250" key="1"/>
<evidence type="ECO:0000305" key="2"/>
<protein>
    <recommendedName>
        <fullName>DNA-directed RNA polymerase subunit omega</fullName>
        <shortName>RNAP omega subunit</shortName>
        <ecNumber>2.7.7.6</ecNumber>
    </recommendedName>
    <alternativeName>
        <fullName>RNA polymerase omega subunit</fullName>
    </alternativeName>
    <alternativeName>
        <fullName>Transcriptase subunit omega</fullName>
    </alternativeName>
</protein>
<feature type="chain" id="PRO_0000128934" description="DNA-directed RNA polymerase subunit omega">
    <location>
        <begin position="1"/>
        <end position="99"/>
    </location>
</feature>
<reference key="1">
    <citation type="journal article" date="1999" name="Science">
        <title>Genome sequence of the radioresistant bacterium Deinococcus radiodurans R1.</title>
        <authorList>
            <person name="White O."/>
            <person name="Eisen J.A."/>
            <person name="Heidelberg J.F."/>
            <person name="Hickey E.K."/>
            <person name="Peterson J.D."/>
            <person name="Dodson R.J."/>
            <person name="Haft D.H."/>
            <person name="Gwinn M.L."/>
            <person name="Nelson W.C."/>
            <person name="Richardson D.L."/>
            <person name="Moffat K.S."/>
            <person name="Qin H."/>
            <person name="Jiang L."/>
            <person name="Pamphile W."/>
            <person name="Crosby M."/>
            <person name="Shen M."/>
            <person name="Vamathevan J.J."/>
            <person name="Lam P."/>
            <person name="McDonald L.A."/>
            <person name="Utterback T.R."/>
            <person name="Zalewski C."/>
            <person name="Makarova K.S."/>
            <person name="Aravind L."/>
            <person name="Daly M.J."/>
            <person name="Minton K.W."/>
            <person name="Fleischmann R.D."/>
            <person name="Ketchum K.A."/>
            <person name="Nelson K.E."/>
            <person name="Salzberg S.L."/>
            <person name="Smith H.O."/>
            <person name="Venter J.C."/>
            <person name="Fraser C.M."/>
        </authorList>
    </citation>
    <scope>NUCLEOTIDE SEQUENCE [LARGE SCALE GENOMIC DNA]</scope>
    <source>
        <strain>ATCC 13939 / DSM 20539 / JCM 16871 / CCUG 27074 / LMG 4051 / NBRC 15346 / NCIMB 9279 / VKM B-1422 / R1</strain>
    </source>
</reference>
<proteinExistence type="inferred from homology"/>
<organism>
    <name type="scientific">Deinococcus radiodurans (strain ATCC 13939 / DSM 20539 / JCM 16871 / CCUG 27074 / LMG 4051 / NBRC 15346 / NCIMB 9279 / VKM B-1422 / R1)</name>
    <dbReference type="NCBI Taxonomy" id="243230"/>
    <lineage>
        <taxon>Bacteria</taxon>
        <taxon>Thermotogati</taxon>
        <taxon>Deinococcota</taxon>
        <taxon>Deinococci</taxon>
        <taxon>Deinococcales</taxon>
        <taxon>Deinococcaceae</taxon>
        <taxon>Deinococcus</taxon>
    </lineage>
</organism>
<keyword id="KW-0240">DNA-directed RNA polymerase</keyword>
<keyword id="KW-0548">Nucleotidyltransferase</keyword>
<keyword id="KW-1185">Reference proteome</keyword>
<keyword id="KW-0804">Transcription</keyword>
<keyword id="KW-0808">Transferase</keyword>
<accession>Q9RRJ6</accession>
<gene>
    <name type="primary">rpoZ</name>
    <name type="ordered locus">DR_2494</name>
</gene>
<sequence length="99" mass="11400">MAEKDIDKLLSLTDSKYRLSVVTAKRALQLRSGAPSVLPVEQRVRTHNLVTQAMRELATGQLTVGTNLIDEQRFHQDYVRQRQAQLQAQLNAERERERD</sequence>
<name>RPOZ_DEIRA</name>
<dbReference type="EC" id="2.7.7.6"/>
<dbReference type="EMBL" id="AE000513">
    <property type="protein sequence ID" value="AAF12036.1"/>
    <property type="status" value="ALT_INIT"/>
    <property type="molecule type" value="Genomic_DNA"/>
</dbReference>
<dbReference type="PIR" id="A75266">
    <property type="entry name" value="A75266"/>
</dbReference>
<dbReference type="RefSeq" id="NP_296214.1">
    <property type="nucleotide sequence ID" value="NC_001263.1"/>
</dbReference>
<dbReference type="RefSeq" id="WP_027480122.1">
    <property type="nucleotide sequence ID" value="NC_001263.1"/>
</dbReference>
<dbReference type="SMR" id="Q9RRJ6"/>
<dbReference type="STRING" id="243230.DR_2494"/>
<dbReference type="PaxDb" id="243230-DR_2494"/>
<dbReference type="EnsemblBacteria" id="AAF12036">
    <property type="protein sequence ID" value="AAF12036"/>
    <property type="gene ID" value="DR_2494"/>
</dbReference>
<dbReference type="GeneID" id="69518747"/>
<dbReference type="KEGG" id="dra:DR_2494"/>
<dbReference type="PATRIC" id="fig|243230.17.peg.2734"/>
<dbReference type="eggNOG" id="COG1758">
    <property type="taxonomic scope" value="Bacteria"/>
</dbReference>
<dbReference type="HOGENOM" id="CLU_2286878_0_0_0"/>
<dbReference type="InParanoid" id="Q9RRJ6"/>
<dbReference type="OrthoDB" id="9796300at2"/>
<dbReference type="Proteomes" id="UP000002524">
    <property type="component" value="Chromosome 1"/>
</dbReference>
<dbReference type="GO" id="GO:0000345">
    <property type="term" value="C:cytosolic DNA-directed RNA polymerase complex"/>
    <property type="evidence" value="ECO:0000318"/>
    <property type="project" value="GO_Central"/>
</dbReference>
<dbReference type="GO" id="GO:0001000">
    <property type="term" value="F:bacterial-type RNA polymerase core enzyme binding"/>
    <property type="evidence" value="ECO:0000318"/>
    <property type="project" value="GO_Central"/>
</dbReference>
<dbReference type="GO" id="GO:0003677">
    <property type="term" value="F:DNA binding"/>
    <property type="evidence" value="ECO:0007669"/>
    <property type="project" value="UniProtKB-UniRule"/>
</dbReference>
<dbReference type="GO" id="GO:0003899">
    <property type="term" value="F:DNA-directed RNA polymerase activity"/>
    <property type="evidence" value="ECO:0007669"/>
    <property type="project" value="UniProtKB-UniRule"/>
</dbReference>
<dbReference type="GO" id="GO:0006352">
    <property type="term" value="P:DNA-templated transcription initiation"/>
    <property type="evidence" value="ECO:0000318"/>
    <property type="project" value="GO_Central"/>
</dbReference>
<dbReference type="Gene3D" id="3.90.940.10">
    <property type="match status" value="1"/>
</dbReference>
<dbReference type="HAMAP" id="MF_00366">
    <property type="entry name" value="RNApol_bact_RpoZ"/>
    <property type="match status" value="1"/>
</dbReference>
<dbReference type="InterPro" id="IPR003716">
    <property type="entry name" value="DNA-dir_RNA_pol_omega"/>
</dbReference>
<dbReference type="InterPro" id="IPR006110">
    <property type="entry name" value="Pol_omega/Rpo6/RPB6"/>
</dbReference>
<dbReference type="InterPro" id="IPR036161">
    <property type="entry name" value="RPB6/omega-like_sf"/>
</dbReference>
<dbReference type="NCBIfam" id="TIGR00690">
    <property type="entry name" value="rpoZ"/>
    <property type="match status" value="1"/>
</dbReference>
<dbReference type="PANTHER" id="PTHR34476">
    <property type="entry name" value="DNA-DIRECTED RNA POLYMERASE SUBUNIT OMEGA"/>
    <property type="match status" value="1"/>
</dbReference>
<dbReference type="PANTHER" id="PTHR34476:SF1">
    <property type="entry name" value="DNA-DIRECTED RNA POLYMERASE SUBUNIT OMEGA"/>
    <property type="match status" value="1"/>
</dbReference>
<dbReference type="Pfam" id="PF01192">
    <property type="entry name" value="RNA_pol_Rpb6"/>
    <property type="match status" value="1"/>
</dbReference>
<dbReference type="SMART" id="SM01409">
    <property type="entry name" value="RNA_pol_Rpb6"/>
    <property type="match status" value="1"/>
</dbReference>
<dbReference type="SUPFAM" id="SSF63562">
    <property type="entry name" value="RPB6/omega subunit-like"/>
    <property type="match status" value="1"/>
</dbReference>